<organism>
    <name type="scientific">Dictyostelium discoideum</name>
    <name type="common">Social amoeba</name>
    <dbReference type="NCBI Taxonomy" id="44689"/>
    <lineage>
        <taxon>Eukaryota</taxon>
        <taxon>Amoebozoa</taxon>
        <taxon>Evosea</taxon>
        <taxon>Eumycetozoa</taxon>
        <taxon>Dictyostelia</taxon>
        <taxon>Dictyosteliales</taxon>
        <taxon>Dictyosteliaceae</taxon>
        <taxon>Dictyostelium</taxon>
    </lineage>
</organism>
<proteinExistence type="evidence at protein level"/>
<dbReference type="EC" id="2.1.1.14"/>
<dbReference type="EMBL" id="AAFI02000030">
    <property type="protein sequence ID" value="EAL67754.1"/>
    <property type="molecule type" value="Genomic_DNA"/>
</dbReference>
<dbReference type="RefSeq" id="XP_641728.1">
    <property type="nucleotide sequence ID" value="XM_636636.1"/>
</dbReference>
<dbReference type="SMR" id="Q54X49"/>
<dbReference type="FunCoup" id="Q54X49">
    <property type="interactions" value="77"/>
</dbReference>
<dbReference type="STRING" id="44689.Q54X49"/>
<dbReference type="PaxDb" id="44689-DDB0230069"/>
<dbReference type="EnsemblProtists" id="EAL67754">
    <property type="protein sequence ID" value="EAL67754"/>
    <property type="gene ID" value="DDB_G0279211"/>
</dbReference>
<dbReference type="GeneID" id="8621924"/>
<dbReference type="KEGG" id="ddi:DDB_G0279211"/>
<dbReference type="dictyBase" id="DDB_G0279211"/>
<dbReference type="VEuPathDB" id="AmoebaDB:DDB_G0279211"/>
<dbReference type="eggNOG" id="KOG2263">
    <property type="taxonomic scope" value="Eukaryota"/>
</dbReference>
<dbReference type="HOGENOM" id="CLU_013175_0_0_1"/>
<dbReference type="InParanoid" id="Q54X49"/>
<dbReference type="OMA" id="KVMKGML"/>
<dbReference type="PhylomeDB" id="Q54X49"/>
<dbReference type="UniPathway" id="UPA00051">
    <property type="reaction ID" value="UER00082"/>
</dbReference>
<dbReference type="PRO" id="PR:Q54X49"/>
<dbReference type="Proteomes" id="UP000002195">
    <property type="component" value="Chromosome 3"/>
</dbReference>
<dbReference type="GO" id="GO:0003871">
    <property type="term" value="F:5-methyltetrahydropteroyltriglutamate-homocysteine S-methyltransferase activity"/>
    <property type="evidence" value="ECO:0000250"/>
    <property type="project" value="dictyBase"/>
</dbReference>
<dbReference type="GO" id="GO:0008270">
    <property type="term" value="F:zinc ion binding"/>
    <property type="evidence" value="ECO:0007669"/>
    <property type="project" value="InterPro"/>
</dbReference>
<dbReference type="GO" id="GO:0009086">
    <property type="term" value="P:methionine biosynthetic process"/>
    <property type="evidence" value="ECO:0000250"/>
    <property type="project" value="dictyBase"/>
</dbReference>
<dbReference type="GO" id="GO:0032259">
    <property type="term" value="P:methylation"/>
    <property type="evidence" value="ECO:0007669"/>
    <property type="project" value="UniProtKB-KW"/>
</dbReference>
<dbReference type="CDD" id="cd03311">
    <property type="entry name" value="CIMS_C_terminal_like"/>
    <property type="match status" value="1"/>
</dbReference>
<dbReference type="CDD" id="cd03312">
    <property type="entry name" value="CIMS_N_terminal_like"/>
    <property type="match status" value="1"/>
</dbReference>
<dbReference type="FunFam" id="3.20.20.210:FF:000002">
    <property type="entry name" value="5-methyltetrahydropteroyltriglutamate--homocysteine methyltransferase"/>
    <property type="match status" value="1"/>
</dbReference>
<dbReference type="FunFam" id="3.20.20.210:FF:000003">
    <property type="entry name" value="5-methyltetrahydropteroyltriglutamate--homocysteine methyltransferase"/>
    <property type="match status" value="1"/>
</dbReference>
<dbReference type="Gene3D" id="3.20.20.210">
    <property type="match status" value="2"/>
</dbReference>
<dbReference type="HAMAP" id="MF_00172">
    <property type="entry name" value="Meth_synth"/>
    <property type="match status" value="1"/>
</dbReference>
<dbReference type="InterPro" id="IPR013215">
    <property type="entry name" value="Cbl-indep_Met_Synth_N"/>
</dbReference>
<dbReference type="InterPro" id="IPR006276">
    <property type="entry name" value="Cobalamin-indep_Met_synthase"/>
</dbReference>
<dbReference type="InterPro" id="IPR002629">
    <property type="entry name" value="Met_Synth_C/arc"/>
</dbReference>
<dbReference type="InterPro" id="IPR038071">
    <property type="entry name" value="UROD/MetE-like_sf"/>
</dbReference>
<dbReference type="NCBIfam" id="TIGR01371">
    <property type="entry name" value="met_syn_B12ind"/>
    <property type="match status" value="1"/>
</dbReference>
<dbReference type="NCBIfam" id="NF003556">
    <property type="entry name" value="PRK05222.1"/>
    <property type="match status" value="1"/>
</dbReference>
<dbReference type="PANTHER" id="PTHR30519">
    <property type="entry name" value="5-METHYLTETRAHYDROPTEROYLTRIGLUTAMATE--HOMOCYSTEINE METHYLTRANSFERASE"/>
    <property type="match status" value="1"/>
</dbReference>
<dbReference type="Pfam" id="PF08267">
    <property type="entry name" value="Meth_synt_1"/>
    <property type="match status" value="1"/>
</dbReference>
<dbReference type="Pfam" id="PF01717">
    <property type="entry name" value="Meth_synt_2"/>
    <property type="match status" value="1"/>
</dbReference>
<dbReference type="SUPFAM" id="SSF51726">
    <property type="entry name" value="UROD/MetE-like"/>
    <property type="match status" value="2"/>
</dbReference>
<reference key="1">
    <citation type="journal article" date="2005" name="Nature">
        <title>The genome of the social amoeba Dictyostelium discoideum.</title>
        <authorList>
            <person name="Eichinger L."/>
            <person name="Pachebat J.A."/>
            <person name="Gloeckner G."/>
            <person name="Rajandream M.A."/>
            <person name="Sucgang R."/>
            <person name="Berriman M."/>
            <person name="Song J."/>
            <person name="Olsen R."/>
            <person name="Szafranski K."/>
            <person name="Xu Q."/>
            <person name="Tunggal B."/>
            <person name="Kummerfeld S."/>
            <person name="Madera M."/>
            <person name="Konfortov B.A."/>
            <person name="Rivero F."/>
            <person name="Bankier A.T."/>
            <person name="Lehmann R."/>
            <person name="Hamlin N."/>
            <person name="Davies R."/>
            <person name="Gaudet P."/>
            <person name="Fey P."/>
            <person name="Pilcher K."/>
            <person name="Chen G."/>
            <person name="Saunders D."/>
            <person name="Sodergren E.J."/>
            <person name="Davis P."/>
            <person name="Kerhornou A."/>
            <person name="Nie X."/>
            <person name="Hall N."/>
            <person name="Anjard C."/>
            <person name="Hemphill L."/>
            <person name="Bason N."/>
            <person name="Farbrother P."/>
            <person name="Desany B."/>
            <person name="Just E."/>
            <person name="Morio T."/>
            <person name="Rost R."/>
            <person name="Churcher C.M."/>
            <person name="Cooper J."/>
            <person name="Haydock S."/>
            <person name="van Driessche N."/>
            <person name="Cronin A."/>
            <person name="Goodhead I."/>
            <person name="Muzny D.M."/>
            <person name="Mourier T."/>
            <person name="Pain A."/>
            <person name="Lu M."/>
            <person name="Harper D."/>
            <person name="Lindsay R."/>
            <person name="Hauser H."/>
            <person name="James K.D."/>
            <person name="Quiles M."/>
            <person name="Madan Babu M."/>
            <person name="Saito T."/>
            <person name="Buchrieser C."/>
            <person name="Wardroper A."/>
            <person name="Felder M."/>
            <person name="Thangavelu M."/>
            <person name="Johnson D."/>
            <person name="Knights A."/>
            <person name="Loulseged H."/>
            <person name="Mungall K.L."/>
            <person name="Oliver K."/>
            <person name="Price C."/>
            <person name="Quail M.A."/>
            <person name="Urushihara H."/>
            <person name="Hernandez J."/>
            <person name="Rabbinowitsch E."/>
            <person name="Steffen D."/>
            <person name="Sanders M."/>
            <person name="Ma J."/>
            <person name="Kohara Y."/>
            <person name="Sharp S."/>
            <person name="Simmonds M.N."/>
            <person name="Spiegler S."/>
            <person name="Tivey A."/>
            <person name="Sugano S."/>
            <person name="White B."/>
            <person name="Walker D."/>
            <person name="Woodward J.R."/>
            <person name="Winckler T."/>
            <person name="Tanaka Y."/>
            <person name="Shaulsky G."/>
            <person name="Schleicher M."/>
            <person name="Weinstock G.M."/>
            <person name="Rosenthal A."/>
            <person name="Cox E.C."/>
            <person name="Chisholm R.L."/>
            <person name="Gibbs R.A."/>
            <person name="Loomis W.F."/>
            <person name="Platzer M."/>
            <person name="Kay R.R."/>
            <person name="Williams J.G."/>
            <person name="Dear P.H."/>
            <person name="Noegel A.A."/>
            <person name="Barrell B.G."/>
            <person name="Kuspa A."/>
        </authorList>
    </citation>
    <scope>NUCLEOTIDE SEQUENCE [LARGE SCALE GENOMIC DNA]</scope>
    <source>
        <strain>AX4</strain>
    </source>
</reference>
<reference key="2">
    <citation type="submission" date="2010-01" db="UniProtKB">
        <authorList>
            <person name="Bienvenut W.V."/>
            <person name="Veltman D.M."/>
            <person name="Insall R.H."/>
        </authorList>
    </citation>
    <scope>PROTEIN SEQUENCE OF 2-11; 82-99; 113-129; 164-183; 312-323; 432-440; 461-471; 678-686; 724-735; 747-764 AND 805-812</scope>
    <scope>CLEAVAGE OF INITIATOR METHIONINE</scope>
    <scope>IDENTIFICATION BY MASS SPECTROMETRY</scope>
</reference>
<comment type="function">
    <text evidence="1">Catalyzes the transfer of a methyl group from 5-methyltetrahydrofolate to homocysteine resulting in methionine formation.</text>
</comment>
<comment type="catalytic activity">
    <reaction>
        <text>5-methyltetrahydropteroyltri-L-glutamate + L-homocysteine = tetrahydropteroyltri-L-glutamate + L-methionine</text>
        <dbReference type="Rhea" id="RHEA:21196"/>
        <dbReference type="ChEBI" id="CHEBI:57844"/>
        <dbReference type="ChEBI" id="CHEBI:58140"/>
        <dbReference type="ChEBI" id="CHEBI:58199"/>
        <dbReference type="ChEBI" id="CHEBI:58207"/>
        <dbReference type="EC" id="2.1.1.14"/>
    </reaction>
</comment>
<comment type="cofactor">
    <cofactor evidence="1">
        <name>Zn(2+)</name>
        <dbReference type="ChEBI" id="CHEBI:29105"/>
    </cofactor>
</comment>
<comment type="pathway">
    <text>Amino-acid biosynthesis; L-methionine biosynthesis via de novo pathway; L-methionine from L-homocysteine (MetE route): step 1/1.</text>
</comment>
<comment type="similarity">
    <text evidence="5">Belongs to the vitamin-B12 independent methionine synthase family.</text>
</comment>
<keyword id="KW-0028">Amino-acid biosynthesis</keyword>
<keyword id="KW-0903">Direct protein sequencing</keyword>
<keyword id="KW-0479">Metal-binding</keyword>
<keyword id="KW-0486">Methionine biosynthesis</keyword>
<keyword id="KW-0489">Methyltransferase</keyword>
<keyword id="KW-1185">Reference proteome</keyword>
<keyword id="KW-0808">Transferase</keyword>
<keyword id="KW-0862">Zinc</keyword>
<accession>Q54X49</accession>
<sequence length="825" mass="94518">MVSSSNLGFPRMGENRELKKLVENYWQGKVEETQFQKELKEIRINHWKLQKEAGIEIIPSNDFSLYDQVLDHIHLFGAIPKRYTPVVESEIEDGSNGLRTYFAMGRGYQTSKAATQVSETNTQGAFASKVEKSIDVGSMEMKKWFDTNYHYIVPEFEDSQQFKLTNYGGYSEPKPIHEFLEAKSIDIETRPVVLGPISFLLLGKSSDSSKPYSSKFDSLVHLNALLGVYEELFKQFEKIGVKSVQIDEPVLCFDLFETELIKNAYTTAFNVIHKAAPNINILIATYFGEIRENIDLITSLPVNGIHIDTIRSSSSEVESVLTKIPTSWTISIGIIDGRNVWKNDLTKSLVTLKNIIAKTGSDRILLAPSCSLLHCPHSLTREIGRVESQVLDWLAFSLEKLKEISFLTYALNKCTFTTENTITFPEDTCSKIKEYYQLNKESNQKRRESKLIHNDIVKKRVTEITPSMLKRENPFPVRREAQRKRLTTLPALFPTTTIGSFPQTKEVRLARSNFKSKKITPEAYDQFIRDEIRKCIKVQEECELDVLVHGEFERTDMVEYFGEYLAGFVFTQNGWVQSYGSRCVKPPIIYGDVNRPVPMTLEYTTFAQTLTTKPMKGMLTGPVTILQWSFVRDDQPRSETCFQIGLAIRDEVTDLENKGIACIQIDEPAIREGLPLRLSDWNQYLKWAIDSFLLSSTGVKDSTQIHSHMCYSDFNDIFESIQRMDTDVLTIENSKSDLKLLKAFEKYGYTNEIGPGLYDIHSPRIPSVEDMKDRVEQMLKYLSTNLLWINPDCGLKTREPETTRLALINMVKVAKQFREIYANKE</sequence>
<evidence type="ECO:0000250" key="1"/>
<evidence type="ECO:0000250" key="2">
    <source>
        <dbReference type="UniProtKB" id="O50008"/>
    </source>
</evidence>
<evidence type="ECO:0000250" key="3">
    <source>
        <dbReference type="UniProtKB" id="P82610"/>
    </source>
</evidence>
<evidence type="ECO:0000269" key="4">
    <source ref="2"/>
</evidence>
<evidence type="ECO:0000305" key="5"/>
<protein>
    <recommendedName>
        <fullName>5-methyltetrahydropteroyltriglutamate--homocysteine methyltransferase</fullName>
        <ecNumber>2.1.1.14</ecNumber>
    </recommendedName>
    <alternativeName>
        <fullName>Cobalamin-independent methionine synthase</fullName>
    </alternativeName>
    <alternativeName>
        <fullName>Methionine synthase, vitamin-B12 independent isozyme</fullName>
    </alternativeName>
</protein>
<name>METE_DICDI</name>
<gene>
    <name type="primary">metE</name>
    <name type="ORF">DDB_G0279211</name>
</gene>
<feature type="initiator methionine" description="Removed" evidence="4">
    <location>
        <position position="1"/>
    </location>
</feature>
<feature type="chain" id="PRO_0000342368" description="5-methyltetrahydropteroyltriglutamate--homocysteine methyltransferase">
    <location>
        <begin position="2"/>
        <end position="825"/>
    </location>
</feature>
<feature type="active site" description="Proton donor" evidence="3">
    <location>
        <position position="761"/>
    </location>
</feature>
<feature type="binding site" evidence="3">
    <location>
        <position position="19"/>
    </location>
    <ligand>
        <name>5-methyltetrahydropteroyltri-L-glutamate</name>
        <dbReference type="ChEBI" id="CHEBI:58207"/>
    </ligand>
</feature>
<feature type="binding site" evidence="3">
    <location>
        <position position="148"/>
    </location>
    <ligand>
        <name>5-methyltetrahydropteroyltri-L-glutamate</name>
        <dbReference type="ChEBI" id="CHEBI:58207"/>
    </ligand>
</feature>
<feature type="binding site" evidence="3">
    <location>
        <begin position="498"/>
        <end position="500"/>
    </location>
    <ligand>
        <name>L-homocysteine</name>
        <dbReference type="ChEBI" id="CHEBI:58199"/>
    </ligand>
</feature>
<feature type="binding site" evidence="3">
    <location>
        <begin position="498"/>
        <end position="500"/>
    </location>
    <ligand>
        <name>L-methionine</name>
        <dbReference type="ChEBI" id="CHEBI:57844"/>
    </ligand>
</feature>
<feature type="binding site" evidence="3">
    <location>
        <position position="551"/>
    </location>
    <ligand>
        <name>L-homocysteine</name>
        <dbReference type="ChEBI" id="CHEBI:58199"/>
    </ligand>
</feature>
<feature type="binding site" evidence="3">
    <location>
        <position position="551"/>
    </location>
    <ligand>
        <name>L-methionine</name>
        <dbReference type="ChEBI" id="CHEBI:57844"/>
    </ligand>
</feature>
<feature type="binding site" evidence="3">
    <location>
        <position position="556"/>
    </location>
    <ligand>
        <name>5-methyltetrahydropteroyltri-L-glutamate</name>
        <dbReference type="ChEBI" id="CHEBI:58207"/>
    </ligand>
</feature>
<feature type="binding site" evidence="3">
    <location>
        <position position="579"/>
    </location>
    <ligand>
        <name>5-methyltetrahydropteroyltri-L-glutamate</name>
        <dbReference type="ChEBI" id="CHEBI:58207"/>
    </ligand>
</feature>
<feature type="binding site" evidence="2">
    <location>
        <begin position="582"/>
        <end position="583"/>
    </location>
    <ligand>
        <name>5-methyltetrahydropteroyltri-L-glutamate</name>
        <dbReference type="ChEBI" id="CHEBI:58207"/>
    </ligand>
</feature>
<feature type="binding site" evidence="3">
    <location>
        <position position="628"/>
    </location>
    <ligand>
        <name>5-methyltetrahydropteroyltri-L-glutamate</name>
        <dbReference type="ChEBI" id="CHEBI:58207"/>
    </ligand>
</feature>
<feature type="binding site" evidence="3">
    <location>
        <position position="666"/>
    </location>
    <ligand>
        <name>L-homocysteine</name>
        <dbReference type="ChEBI" id="CHEBI:58199"/>
    </ligand>
</feature>
<feature type="binding site" evidence="3">
    <location>
        <position position="666"/>
    </location>
    <ligand>
        <name>L-methionine</name>
        <dbReference type="ChEBI" id="CHEBI:57844"/>
    </ligand>
</feature>
<feature type="binding site" evidence="2">
    <location>
        <position position="708"/>
    </location>
    <ligand>
        <name>Zn(2+)</name>
        <dbReference type="ChEBI" id="CHEBI:29105"/>
        <note>catalytic</note>
    </ligand>
</feature>
<feature type="binding site" evidence="2">
    <location>
        <position position="710"/>
    </location>
    <ligand>
        <name>Zn(2+)</name>
        <dbReference type="ChEBI" id="CHEBI:29105"/>
        <note>catalytic</note>
    </ligand>
</feature>
<feature type="binding site" evidence="3">
    <location>
        <position position="732"/>
    </location>
    <ligand>
        <name>Zn(2+)</name>
        <dbReference type="ChEBI" id="CHEBI:29105"/>
        <note>catalytic</note>
    </ligand>
</feature>
<feature type="binding site" evidence="2">
    <location>
        <position position="793"/>
    </location>
    <ligand>
        <name>Zn(2+)</name>
        <dbReference type="ChEBI" id="CHEBI:29105"/>
        <note>catalytic</note>
    </ligand>
</feature>